<name>CLPP1_SYNY3</name>
<dbReference type="EC" id="3.4.21.92" evidence="1"/>
<dbReference type="EMBL" id="BA000022">
    <property type="protein sequence ID" value="BAA10836.1"/>
    <property type="molecule type" value="Genomic_DNA"/>
</dbReference>
<dbReference type="PIR" id="S75989">
    <property type="entry name" value="S75989"/>
</dbReference>
<dbReference type="SMR" id="P54416"/>
<dbReference type="FunCoup" id="P54416">
    <property type="interactions" value="422"/>
</dbReference>
<dbReference type="IntAct" id="P54416">
    <property type="interactions" value="2"/>
</dbReference>
<dbReference type="STRING" id="1148.gene:10500340"/>
<dbReference type="MEROPS" id="S14.001"/>
<dbReference type="PaxDb" id="1148-1001349"/>
<dbReference type="EnsemblBacteria" id="BAA10836">
    <property type="protein sequence ID" value="BAA10836"/>
    <property type="gene ID" value="BAA10836"/>
</dbReference>
<dbReference type="KEGG" id="syn:slr0542"/>
<dbReference type="eggNOG" id="COG0740">
    <property type="taxonomic scope" value="Bacteria"/>
</dbReference>
<dbReference type="InParanoid" id="P54416"/>
<dbReference type="PhylomeDB" id="P54416"/>
<dbReference type="BRENDA" id="3.4.21.92">
    <property type="organism ID" value="382"/>
</dbReference>
<dbReference type="Proteomes" id="UP000001425">
    <property type="component" value="Chromosome"/>
</dbReference>
<dbReference type="GO" id="GO:0005737">
    <property type="term" value="C:cytoplasm"/>
    <property type="evidence" value="ECO:0007669"/>
    <property type="project" value="UniProtKB-SubCell"/>
</dbReference>
<dbReference type="GO" id="GO:0009368">
    <property type="term" value="C:endopeptidase Clp complex"/>
    <property type="evidence" value="ECO:0000318"/>
    <property type="project" value="GO_Central"/>
</dbReference>
<dbReference type="GO" id="GO:0004176">
    <property type="term" value="F:ATP-dependent peptidase activity"/>
    <property type="evidence" value="ECO:0000318"/>
    <property type="project" value="GO_Central"/>
</dbReference>
<dbReference type="GO" id="GO:0051117">
    <property type="term" value="F:ATPase binding"/>
    <property type="evidence" value="ECO:0000318"/>
    <property type="project" value="GO_Central"/>
</dbReference>
<dbReference type="GO" id="GO:0004252">
    <property type="term" value="F:serine-type endopeptidase activity"/>
    <property type="evidence" value="ECO:0000318"/>
    <property type="project" value="GO_Central"/>
</dbReference>
<dbReference type="GO" id="GO:0006515">
    <property type="term" value="P:protein quality control for misfolded or incompletely synthesized proteins"/>
    <property type="evidence" value="ECO:0000318"/>
    <property type="project" value="GO_Central"/>
</dbReference>
<dbReference type="CDD" id="cd07017">
    <property type="entry name" value="S14_ClpP_2"/>
    <property type="match status" value="1"/>
</dbReference>
<dbReference type="FunFam" id="3.90.226.10:FF:000001">
    <property type="entry name" value="ATP-dependent Clp protease proteolytic subunit"/>
    <property type="match status" value="1"/>
</dbReference>
<dbReference type="Gene3D" id="3.90.226.10">
    <property type="entry name" value="2-enoyl-CoA Hydratase, Chain A, domain 1"/>
    <property type="match status" value="1"/>
</dbReference>
<dbReference type="HAMAP" id="MF_00444">
    <property type="entry name" value="ClpP"/>
    <property type="match status" value="1"/>
</dbReference>
<dbReference type="InterPro" id="IPR001907">
    <property type="entry name" value="ClpP"/>
</dbReference>
<dbReference type="InterPro" id="IPR029045">
    <property type="entry name" value="ClpP/crotonase-like_dom_sf"/>
</dbReference>
<dbReference type="InterPro" id="IPR023562">
    <property type="entry name" value="ClpP/TepA"/>
</dbReference>
<dbReference type="InterPro" id="IPR033135">
    <property type="entry name" value="ClpP_His_AS"/>
</dbReference>
<dbReference type="InterPro" id="IPR018215">
    <property type="entry name" value="ClpP_Ser_AS"/>
</dbReference>
<dbReference type="NCBIfam" id="TIGR00493">
    <property type="entry name" value="clpP"/>
    <property type="match status" value="1"/>
</dbReference>
<dbReference type="NCBIfam" id="NF001368">
    <property type="entry name" value="PRK00277.1"/>
    <property type="match status" value="1"/>
</dbReference>
<dbReference type="NCBIfam" id="NF009205">
    <property type="entry name" value="PRK12553.1"/>
    <property type="match status" value="1"/>
</dbReference>
<dbReference type="PANTHER" id="PTHR10381">
    <property type="entry name" value="ATP-DEPENDENT CLP PROTEASE PROTEOLYTIC SUBUNIT"/>
    <property type="match status" value="1"/>
</dbReference>
<dbReference type="PANTHER" id="PTHR10381:SF70">
    <property type="entry name" value="ATP-DEPENDENT CLP PROTEASE PROTEOLYTIC SUBUNIT"/>
    <property type="match status" value="1"/>
</dbReference>
<dbReference type="Pfam" id="PF00574">
    <property type="entry name" value="CLP_protease"/>
    <property type="match status" value="1"/>
</dbReference>
<dbReference type="PRINTS" id="PR00127">
    <property type="entry name" value="CLPPROTEASEP"/>
</dbReference>
<dbReference type="SUPFAM" id="SSF52096">
    <property type="entry name" value="ClpP/crotonase"/>
    <property type="match status" value="1"/>
</dbReference>
<dbReference type="PROSITE" id="PS00382">
    <property type="entry name" value="CLP_PROTEASE_HIS"/>
    <property type="match status" value="1"/>
</dbReference>
<dbReference type="PROSITE" id="PS00381">
    <property type="entry name" value="CLP_PROTEASE_SER"/>
    <property type="match status" value="1"/>
</dbReference>
<proteinExistence type="inferred from homology"/>
<organism>
    <name type="scientific">Synechocystis sp. (strain ATCC 27184 / PCC 6803 / Kazusa)</name>
    <dbReference type="NCBI Taxonomy" id="1111708"/>
    <lineage>
        <taxon>Bacteria</taxon>
        <taxon>Bacillati</taxon>
        <taxon>Cyanobacteriota</taxon>
        <taxon>Cyanophyceae</taxon>
        <taxon>Synechococcales</taxon>
        <taxon>Merismopediaceae</taxon>
        <taxon>Synechocystis</taxon>
    </lineage>
</organism>
<sequence>MIPTVIETSGRGDRAFDIYSRLLRERIVFLGQEVRDENANLVVAQLLFLEAEDPEKDIYLYINSPGGSVSAGLGIFDTMNQIRPDVCTICIGLAASMGAFLLSAGAKGKRMSLPNSRIMIHQPLGGAQGQATDIEIQAKEILYLKALLNQHLANHTGKSLEEITADTERDFFMSAEESKEYGLIDQVINRRPSASDPI</sequence>
<gene>
    <name evidence="1" type="primary">clpP1</name>
    <name type="ordered locus">slr0542</name>
</gene>
<accession>P54416</accession>
<protein>
    <recommendedName>
        <fullName evidence="1">ATP-dependent Clp protease proteolytic subunit 1</fullName>
        <ecNumber evidence="1">3.4.21.92</ecNumber>
    </recommendedName>
    <alternativeName>
        <fullName evidence="1">Endopeptidase Clp 1</fullName>
    </alternativeName>
</protein>
<keyword id="KW-0963">Cytoplasm</keyword>
<keyword id="KW-0378">Hydrolase</keyword>
<keyword id="KW-0645">Protease</keyword>
<keyword id="KW-1185">Reference proteome</keyword>
<keyword id="KW-0720">Serine protease</keyword>
<comment type="function">
    <text evidence="1">Cleaves peptides in various proteins in a process that requires ATP hydrolysis. Has a chymotrypsin-like activity. Plays a major role in the degradation of misfolded proteins.</text>
</comment>
<comment type="catalytic activity">
    <reaction evidence="1">
        <text>Hydrolysis of proteins to small peptides in the presence of ATP and magnesium. alpha-casein is the usual test substrate. In the absence of ATP, only oligopeptides shorter than five residues are hydrolyzed (such as succinyl-Leu-Tyr-|-NHMec, and Leu-Tyr-Leu-|-Tyr-Trp, in which cleavage of the -Tyr-|-Leu- and -Tyr-|-Trp bonds also occurs).</text>
        <dbReference type="EC" id="3.4.21.92"/>
    </reaction>
</comment>
<comment type="subunit">
    <text evidence="1">Fourteen ClpP subunits assemble into 2 heptameric rings which stack back to back to give a disk-like structure with a central cavity, resembling the structure of eukaryotic proteasomes.</text>
</comment>
<comment type="subcellular location">
    <subcellularLocation>
        <location evidence="1">Cytoplasm</location>
    </subcellularLocation>
</comment>
<comment type="similarity">
    <text evidence="1">Belongs to the peptidase S14 family.</text>
</comment>
<feature type="chain" id="PRO_0000179694" description="ATP-dependent Clp protease proteolytic subunit 1">
    <location>
        <begin position="1"/>
        <end position="198"/>
    </location>
</feature>
<feature type="active site" description="Nucleophile" evidence="1">
    <location>
        <position position="96"/>
    </location>
</feature>
<feature type="active site" evidence="1">
    <location>
        <position position="121"/>
    </location>
</feature>
<reference key="1">
    <citation type="journal article" date="1995" name="DNA Res.">
        <title>Sequence analysis of the genome of the unicellular cyanobacterium Synechocystis sp. strain PCC6803. I. Sequence features in the 1 Mb region from map positions 64% to 92% of the genome.</title>
        <authorList>
            <person name="Kaneko T."/>
            <person name="Tanaka A."/>
            <person name="Sato S."/>
            <person name="Kotani H."/>
            <person name="Sazuka T."/>
            <person name="Miyajima N."/>
            <person name="Sugiura M."/>
            <person name="Tabata S."/>
        </authorList>
    </citation>
    <scope>NUCLEOTIDE SEQUENCE [LARGE SCALE GENOMIC DNA]</scope>
    <source>
        <strain>ATCC 27184 / PCC 6803 / N-1</strain>
    </source>
</reference>
<reference key="2">
    <citation type="journal article" date="1996" name="DNA Res.">
        <title>Sequence analysis of the genome of the unicellular cyanobacterium Synechocystis sp. strain PCC6803. II. Sequence determination of the entire genome and assignment of potential protein-coding regions.</title>
        <authorList>
            <person name="Kaneko T."/>
            <person name="Sato S."/>
            <person name="Kotani H."/>
            <person name="Tanaka A."/>
            <person name="Asamizu E."/>
            <person name="Nakamura Y."/>
            <person name="Miyajima N."/>
            <person name="Hirosawa M."/>
            <person name="Sugiura M."/>
            <person name="Sasamoto S."/>
            <person name="Kimura T."/>
            <person name="Hosouchi T."/>
            <person name="Matsuno A."/>
            <person name="Muraki A."/>
            <person name="Nakazaki N."/>
            <person name="Naruo K."/>
            <person name="Okumura S."/>
            <person name="Shimpo S."/>
            <person name="Takeuchi C."/>
            <person name="Wada T."/>
            <person name="Watanabe A."/>
            <person name="Yamada M."/>
            <person name="Yasuda M."/>
            <person name="Tabata S."/>
        </authorList>
    </citation>
    <scope>NUCLEOTIDE SEQUENCE [LARGE SCALE GENOMIC DNA]</scope>
    <source>
        <strain>ATCC 27184 / PCC 6803 / Kazusa</strain>
    </source>
</reference>
<evidence type="ECO:0000255" key="1">
    <source>
        <dbReference type="HAMAP-Rule" id="MF_00444"/>
    </source>
</evidence>